<comment type="function">
    <text>Interacts specifically with the 8-bp sequence 5'-CACGTGGC-3'in the abscisic acid response element (ABARE). Also binds to the hexamer motif 5'-ACGTCA-3' of histone gene promoters.</text>
</comment>
<comment type="subunit">
    <text>Heterodimer.</text>
</comment>
<comment type="subcellular location">
    <subcellularLocation>
        <location>Nucleus</location>
    </subcellularLocation>
</comment>
<comment type="similarity">
    <text evidence="3">Belongs to the bZIP family.</text>
</comment>
<feature type="chain" id="PRO_0000076563" description="DNA-binding protein EMBP-1">
    <location>
        <begin position="1"/>
        <end position="354"/>
    </location>
</feature>
<feature type="domain" description="bZIP" evidence="1">
    <location>
        <begin position="250"/>
        <end position="313"/>
    </location>
</feature>
<feature type="region of interest" description="Disordered" evidence="2">
    <location>
        <begin position="1"/>
        <end position="24"/>
    </location>
</feature>
<feature type="region of interest" description="Disordered" evidence="2">
    <location>
        <begin position="106"/>
        <end position="193"/>
    </location>
</feature>
<feature type="region of interest" description="Disordered" evidence="2">
    <location>
        <begin position="230"/>
        <end position="273"/>
    </location>
</feature>
<feature type="region of interest" description="Basic motif" evidence="1">
    <location>
        <begin position="252"/>
        <end position="271"/>
    </location>
</feature>
<feature type="region of interest" description="Leucine-zipper" evidence="1">
    <location>
        <begin position="278"/>
        <end position="299"/>
    </location>
</feature>
<feature type="compositionally biased region" description="Low complexity" evidence="2">
    <location>
        <begin position="127"/>
        <end position="140"/>
    </location>
</feature>
<feature type="compositionally biased region" description="Low complexity" evidence="2">
    <location>
        <begin position="232"/>
        <end position="245"/>
    </location>
</feature>
<feature type="compositionally biased region" description="Basic and acidic residues" evidence="2">
    <location>
        <begin position="246"/>
        <end position="265"/>
    </location>
</feature>
<keyword id="KW-0938">Abscisic acid signaling pathway</keyword>
<keyword id="KW-0238">DNA-binding</keyword>
<keyword id="KW-0539">Nucleus</keyword>
<keyword id="KW-1185">Reference proteome</keyword>
<keyword id="KW-0804">Transcription</keyword>
<keyword id="KW-0805">Transcription regulation</keyword>
<evidence type="ECO:0000255" key="1">
    <source>
        <dbReference type="PROSITE-ProRule" id="PRU00978"/>
    </source>
</evidence>
<evidence type="ECO:0000256" key="2">
    <source>
        <dbReference type="SAM" id="MobiDB-lite"/>
    </source>
</evidence>
<evidence type="ECO:0000305" key="3"/>
<reference key="1">
    <citation type="journal article" date="1990" name="Science">
        <title>A plant leucine zipper protein that recognizes an abscisic acid response element.</title>
        <authorList>
            <person name="Guiltinan M.J."/>
            <person name="Marcotte W.R. Jr."/>
            <person name="Quatrano R.S."/>
        </authorList>
    </citation>
    <scope>NUCLEOTIDE SEQUENCE [MRNA]</scope>
</reference>
<reference key="2">
    <citation type="journal article" date="1994" name="J. Biol. Chem.">
        <title>The HBP-1 family of wheat basic/leucine zipper proteins interacts with overlapping cis-acting hexamer motifs of plant histone genes.</title>
        <authorList>
            <person name="Mikami K."/>
            <person name="Sakamoto A."/>
            <person name="Iwabuchi M."/>
        </authorList>
    </citation>
    <scope>NUCLEOTIDE SEQUENCE [MRNA] OF 98-354</scope>
    <scope>DNA-BINDING</scope>
</reference>
<reference key="3">
    <citation type="journal article" date="1994" name="Nucleic Acids Res.">
        <title>DNA binding specificity of the wheat bZIP protein EmBP-1.</title>
        <authorList>
            <person name="Niu X."/>
            <person name="Guiltinan M.J."/>
        </authorList>
    </citation>
    <scope>DNA-BINDING</scope>
</reference>
<dbReference type="EMBL" id="M62893">
    <property type="protein sequence ID" value="AAA68428.1"/>
    <property type="molecule type" value="mRNA"/>
</dbReference>
<dbReference type="EMBL" id="D12919">
    <property type="protein sequence ID" value="BAA02303.2"/>
    <property type="molecule type" value="mRNA"/>
</dbReference>
<dbReference type="PIR" id="A38486">
    <property type="entry name" value="A38486"/>
</dbReference>
<dbReference type="PIR" id="T06487">
    <property type="entry name" value="T06487"/>
</dbReference>
<dbReference type="SMR" id="P25032"/>
<dbReference type="PaxDb" id="4565-Traes_5BL_F3018E8CA.1"/>
<dbReference type="eggNOG" id="ENOG502QVYY">
    <property type="taxonomic scope" value="Eukaryota"/>
</dbReference>
<dbReference type="Proteomes" id="UP000019116">
    <property type="component" value="Unplaced"/>
</dbReference>
<dbReference type="ExpressionAtlas" id="P25032">
    <property type="expression patterns" value="baseline and differential"/>
</dbReference>
<dbReference type="GO" id="GO:0005634">
    <property type="term" value="C:nucleus"/>
    <property type="evidence" value="ECO:0000318"/>
    <property type="project" value="GO_Central"/>
</dbReference>
<dbReference type="GO" id="GO:0003700">
    <property type="term" value="F:DNA-binding transcription factor activity"/>
    <property type="evidence" value="ECO:0007669"/>
    <property type="project" value="InterPro"/>
</dbReference>
<dbReference type="GO" id="GO:0043565">
    <property type="term" value="F:sequence-specific DNA binding"/>
    <property type="evidence" value="ECO:0000318"/>
    <property type="project" value="GO_Central"/>
</dbReference>
<dbReference type="GO" id="GO:0009738">
    <property type="term" value="P:abscisic acid-activated signaling pathway"/>
    <property type="evidence" value="ECO:0007669"/>
    <property type="project" value="UniProtKB-KW"/>
</dbReference>
<dbReference type="GO" id="GO:0006355">
    <property type="term" value="P:regulation of DNA-templated transcription"/>
    <property type="evidence" value="ECO:0000318"/>
    <property type="project" value="GO_Central"/>
</dbReference>
<dbReference type="CDD" id="cd14702">
    <property type="entry name" value="bZIP_plant_GBF1"/>
    <property type="match status" value="1"/>
</dbReference>
<dbReference type="FunFam" id="1.20.5.170:FF:000020">
    <property type="entry name" value="BZIP transcription factor"/>
    <property type="match status" value="1"/>
</dbReference>
<dbReference type="Gene3D" id="1.20.5.170">
    <property type="match status" value="1"/>
</dbReference>
<dbReference type="InterPro" id="IPR004827">
    <property type="entry name" value="bZIP"/>
</dbReference>
<dbReference type="InterPro" id="IPR045314">
    <property type="entry name" value="bZIP_plant_GBF1"/>
</dbReference>
<dbReference type="InterPro" id="IPR046347">
    <property type="entry name" value="bZIP_sf"/>
</dbReference>
<dbReference type="InterPro" id="IPR044827">
    <property type="entry name" value="GBF-like"/>
</dbReference>
<dbReference type="PANTHER" id="PTHR45967:SF31">
    <property type="entry name" value="DNA-BINDING PROTEIN EMBP-1"/>
    <property type="match status" value="1"/>
</dbReference>
<dbReference type="PANTHER" id="PTHR45967">
    <property type="entry name" value="G-BOX-BINDING FACTOR 3-RELATED"/>
    <property type="match status" value="1"/>
</dbReference>
<dbReference type="Pfam" id="PF00170">
    <property type="entry name" value="bZIP_1"/>
    <property type="match status" value="1"/>
</dbReference>
<dbReference type="SMART" id="SM00338">
    <property type="entry name" value="BRLZ"/>
    <property type="match status" value="1"/>
</dbReference>
<dbReference type="SUPFAM" id="SSF57959">
    <property type="entry name" value="Leucine zipper domain"/>
    <property type="match status" value="1"/>
</dbReference>
<dbReference type="PROSITE" id="PS50217">
    <property type="entry name" value="BZIP"/>
    <property type="match status" value="1"/>
</dbReference>
<dbReference type="PROSITE" id="PS00036">
    <property type="entry name" value="BZIP_BASIC"/>
    <property type="match status" value="1"/>
</dbReference>
<proteinExistence type="evidence at protein level"/>
<protein>
    <recommendedName>
        <fullName>DNA-binding protein EMBP-1</fullName>
    </recommendedName>
    <alternativeName>
        <fullName>Histone promoter-binding protein 1a(1)</fullName>
        <shortName>HBP-1a(1)</shortName>
    </alternativeName>
</protein>
<name>EMBP1_WHEAT</name>
<sequence length="354" mass="36193">MASSSSATSGDDRPPAAGGGTPAQAHAEWAASMHAYYAAAASAAGHPYAAWPLPPQAQQHGLVAAGAGAAYGAGAVPHVPPPPAGTRHAHASMAAGVPYMAGESASAAGKGKRVGKTQRVPSGEINSSSGSGDAGSQGSSEKGDAGANQKGSSSSAKRRKSGAAKTEGEPSQAATVQNAVTEPPLEDKERSASKLLVLAPGRAALTSAAPNLNIGMDPLSASPSSLVQGEVNAAASSQSNASLSQMDERELKRERRKQSNRESARRSRLRKQQECEELAQKVSELTAANGTLRSELDQLKKDCKTMETENKKLMGKILSHDDKMQQSEGPSVVTTLSIQVEAPEPHQGGHGKAS</sequence>
<accession>P25032</accession>
<accession>Q41555</accession>
<organism>
    <name type="scientific">Triticum aestivum</name>
    <name type="common">Wheat</name>
    <dbReference type="NCBI Taxonomy" id="4565"/>
    <lineage>
        <taxon>Eukaryota</taxon>
        <taxon>Viridiplantae</taxon>
        <taxon>Streptophyta</taxon>
        <taxon>Embryophyta</taxon>
        <taxon>Tracheophyta</taxon>
        <taxon>Spermatophyta</taxon>
        <taxon>Magnoliopsida</taxon>
        <taxon>Liliopsida</taxon>
        <taxon>Poales</taxon>
        <taxon>Poaceae</taxon>
        <taxon>BOP clade</taxon>
        <taxon>Pooideae</taxon>
        <taxon>Triticodae</taxon>
        <taxon>Triticeae</taxon>
        <taxon>Triticinae</taxon>
        <taxon>Triticum</taxon>
    </lineage>
</organism>